<name>PHAD2_AMAPH</name>
<evidence type="ECO:0000250" key="1">
    <source>
        <dbReference type="UniProtKB" id="A0A067SLB9"/>
    </source>
</evidence>
<evidence type="ECO:0000250" key="2">
    <source>
        <dbReference type="UniProtKB" id="P85421"/>
    </source>
</evidence>
<evidence type="ECO:0000269" key="3">
    <source>
    </source>
</evidence>
<evidence type="ECO:0000303" key="4">
    <source>
    </source>
</evidence>
<evidence type="ECO:0000305" key="5"/>
<evidence type="ECO:0000305" key="6">
    <source>
    </source>
</evidence>
<dbReference type="PDB" id="7BTI">
    <property type="method" value="EM"/>
    <property type="resolution" value="3.60 A"/>
    <property type="chains" value="X/Y/Z=10-16"/>
</dbReference>
<dbReference type="PDBsum" id="7BTI"/>
<dbReference type="EMDB" id="EMD-30179"/>
<dbReference type="SMR" id="P0CU64"/>
<dbReference type="GO" id="GO:0090729">
    <property type="term" value="F:toxin activity"/>
    <property type="evidence" value="ECO:0007669"/>
    <property type="project" value="UniProtKB-KW"/>
</dbReference>
<dbReference type="InterPro" id="IPR027582">
    <property type="entry name" value="Amanitin/phalloidin"/>
</dbReference>
<dbReference type="NCBIfam" id="TIGR04309">
    <property type="entry name" value="amanitin"/>
    <property type="match status" value="1"/>
</dbReference>
<proteinExistence type="evidence at protein level"/>
<feature type="propeptide" id="PRO_0000443792" evidence="6">
    <location>
        <begin position="1"/>
        <end position="10"/>
    </location>
</feature>
<feature type="peptide" id="PRO_0000443793" description="Phalloidin" evidence="6">
    <location>
        <begin position="11"/>
        <end position="17"/>
    </location>
</feature>
<feature type="propeptide" id="PRO_0000443794" evidence="6">
    <location>
        <begin position="18"/>
        <end position="34"/>
    </location>
</feature>
<feature type="cross-link" description="Cyclopeptide (Ala-Pro)" evidence="6">
    <location>
        <begin position="11"/>
        <end position="17"/>
    </location>
</feature>
<feature type="cross-link" description="2'-cysteinyl-6'-hydroxytryptophan sulfoxide (Trp-Cys)" evidence="2">
    <location>
        <begin position="12"/>
        <end position="16"/>
    </location>
</feature>
<organism>
    <name type="scientific">Amanita phalloides</name>
    <name type="common">Death cap</name>
    <dbReference type="NCBI Taxonomy" id="67723"/>
    <lineage>
        <taxon>Eukaryota</taxon>
        <taxon>Fungi</taxon>
        <taxon>Dikarya</taxon>
        <taxon>Basidiomycota</taxon>
        <taxon>Agaricomycotina</taxon>
        <taxon>Agaricomycetes</taxon>
        <taxon>Agaricomycetidae</taxon>
        <taxon>Agaricales</taxon>
        <taxon>Pluteineae</taxon>
        <taxon>Amanitaceae</taxon>
        <taxon>Amanita</taxon>
    </lineage>
</organism>
<accession>P0CU64</accession>
<reference key="1">
    <citation type="journal article" date="2016" name="BMC Genomics">
        <title>Expansion and diversification of the MSDIN family of cyclic peptide genes in the poisonous agarics Amanita phalloides and A. bisporigera.</title>
        <authorList>
            <person name="Pulman J.A."/>
            <person name="Childs K.L."/>
            <person name="Sgambelluri R.M."/>
            <person name="Walton J.D."/>
        </authorList>
    </citation>
    <scope>NUCLEOTIDE SEQUENCE [LARGE SCALE GENOMIC DNA]</scope>
    <scope>FUNCTION</scope>
</reference>
<reference key="2">
    <citation type="journal article" date="1981" name="Biochemistry">
        <title>Mechanism of action of phalloidin on the polymerization of muscle actin.</title>
        <authorList>
            <person name="Estes J.E."/>
            <person name="Selden L.A."/>
            <person name="Gershman L.C."/>
        </authorList>
    </citation>
    <scope>FUNCTION</scope>
</reference>
<comment type="function">
    <text evidence="3 6">Toxin that belongs to the bicyclic heptapeptides called phallotoxins (PubMed:27978833). Although structurally related to amatoxins, phallotoxins have a different mode of action, which is the stabilization of F-actin (PubMed:6452160). Phallotoxins are poisonous when administered parenterally, but not orally because of poor absorption (PubMed:27978833).</text>
</comment>
<comment type="PTM">
    <text evidence="1">Processed by the macrocyclase-peptidase enzyme POPB to yield a toxic cyclic heptapeptide (By similarity). POPB first removes 10 residues from the N-terminus (By similarity). Conformational trapping of the remaining peptide forces the enzyme to release this intermediate rather than proceed to macrocyclization (By similarity). The enzyme rebinds the remaining peptide in a different conformation and catalyzes macrocyclization of the N-terminal 7 residues (By similarity).</text>
</comment>
<comment type="similarity">
    <text evidence="5">Belongs to the MSDIN fungal toxin family.</text>
</comment>
<sequence length="34" mass="3547">MSDINTTCLPAWLATCPCTGDDVNPTLTCGESLC</sequence>
<keyword id="KW-0002">3D-structure</keyword>
<keyword id="KW-0883">Thioether bond</keyword>
<keyword id="KW-0800">Toxin</keyword>
<protein>
    <recommendedName>
        <fullName evidence="4">Phalloidin proprotein</fullName>
    </recommendedName>
    <component>
        <recommendedName>
            <fullName evidence="4">Phalloidin</fullName>
        </recommendedName>
    </component>
</protein>